<keyword id="KW-0539">Nucleus</keyword>
<keyword id="KW-1185">Reference proteome</keyword>
<keyword id="KW-0690">Ribosome biogenesis</keyword>
<keyword id="KW-0698">rRNA processing</keyword>
<protein>
    <recommendedName>
        <fullName>rRNA-processing protein utp23</fullName>
    </recommendedName>
    <alternativeName>
        <fullName>U three protein 23</fullName>
    </alternativeName>
</protein>
<sequence>MRQKRAKNYRKLMHTYQLLFGFREPYQVLVDADFLKDLSQQKIDIQAALARTVQGAIKPMITQCCIRQLYSKSDELKQEIRIAKSFERRRCGHIDEALSPSECIQSVVNINGRNKHRYVVATQDPELRQALRSVPGVPLIYMKRSVVILEPASRATLLEKHNKESVQMGMSKEEKLLLSGKKRSANELAIDDQDTKESTDLAGTEDSAPKANKKRKGPKGPNPLSIKKRSSKNHTTDEPTLPVNIIGDVGERKKHRRKRK</sequence>
<organism>
    <name type="scientific">Schizosaccharomyces pombe (strain 972 / ATCC 24843)</name>
    <name type="common">Fission yeast</name>
    <dbReference type="NCBI Taxonomy" id="284812"/>
    <lineage>
        <taxon>Eukaryota</taxon>
        <taxon>Fungi</taxon>
        <taxon>Dikarya</taxon>
        <taxon>Ascomycota</taxon>
        <taxon>Taphrinomycotina</taxon>
        <taxon>Schizosaccharomycetes</taxon>
        <taxon>Schizosaccharomycetales</taxon>
        <taxon>Schizosaccharomycetaceae</taxon>
        <taxon>Schizosaccharomyces</taxon>
    </lineage>
</organism>
<accession>O74862</accession>
<dbReference type="EMBL" id="CU329672">
    <property type="protein sequence ID" value="CAA21426.1"/>
    <property type="molecule type" value="Genomic_DNA"/>
</dbReference>
<dbReference type="PIR" id="T41155">
    <property type="entry name" value="T41155"/>
</dbReference>
<dbReference type="RefSeq" id="NP_588391.1">
    <property type="nucleotide sequence ID" value="NM_001023382.2"/>
</dbReference>
<dbReference type="SMR" id="O74862"/>
<dbReference type="BioGRID" id="275730">
    <property type="interactions" value="5"/>
</dbReference>
<dbReference type="FunCoup" id="O74862">
    <property type="interactions" value="765"/>
</dbReference>
<dbReference type="STRING" id="284812.O74862"/>
<dbReference type="iPTMnet" id="O74862"/>
<dbReference type="PaxDb" id="4896-SPCC18.12c.1"/>
<dbReference type="EnsemblFungi" id="SPCC18.12c.1">
    <property type="protein sequence ID" value="SPCC18.12c.1:pep"/>
    <property type="gene ID" value="SPCC18.12c"/>
</dbReference>
<dbReference type="GeneID" id="2539158"/>
<dbReference type="KEGG" id="spo:2539158"/>
<dbReference type="PomBase" id="SPCC18.12c">
    <property type="gene designation" value="utp23"/>
</dbReference>
<dbReference type="VEuPathDB" id="FungiDB:SPCC18.12c"/>
<dbReference type="eggNOG" id="KOG3164">
    <property type="taxonomic scope" value="Eukaryota"/>
</dbReference>
<dbReference type="HOGENOM" id="CLU_053567_1_1_1"/>
<dbReference type="InParanoid" id="O74862"/>
<dbReference type="OMA" id="CCMQALY"/>
<dbReference type="PhylomeDB" id="O74862"/>
<dbReference type="PRO" id="PR:O74862"/>
<dbReference type="Proteomes" id="UP000002485">
    <property type="component" value="Chromosome III"/>
</dbReference>
<dbReference type="GO" id="GO:0005730">
    <property type="term" value="C:nucleolus"/>
    <property type="evidence" value="ECO:0007005"/>
    <property type="project" value="PomBase"/>
</dbReference>
<dbReference type="GO" id="GO:0032040">
    <property type="term" value="C:small-subunit processome"/>
    <property type="evidence" value="ECO:0000318"/>
    <property type="project" value="GO_Central"/>
</dbReference>
<dbReference type="GO" id="GO:0004540">
    <property type="term" value="F:RNA nuclease activity"/>
    <property type="evidence" value="ECO:0000255"/>
    <property type="project" value="PomBase"/>
</dbReference>
<dbReference type="GO" id="GO:0070181">
    <property type="term" value="F:small ribosomal subunit rRNA binding"/>
    <property type="evidence" value="ECO:0000318"/>
    <property type="project" value="GO_Central"/>
</dbReference>
<dbReference type="GO" id="GO:0006364">
    <property type="term" value="P:rRNA processing"/>
    <property type="evidence" value="ECO:0000266"/>
    <property type="project" value="PomBase"/>
</dbReference>
<dbReference type="CDD" id="cd09865">
    <property type="entry name" value="PIN_ScUtp23p-like"/>
    <property type="match status" value="1"/>
</dbReference>
<dbReference type="FunFam" id="3.40.50.1010:FF:000006">
    <property type="entry name" value="rRNA-processing protein UTP23 homolog"/>
    <property type="match status" value="1"/>
</dbReference>
<dbReference type="Gene3D" id="3.40.50.1010">
    <property type="entry name" value="5'-nuclease"/>
    <property type="match status" value="1"/>
</dbReference>
<dbReference type="InterPro" id="IPR006984">
    <property type="entry name" value="Fcf1/Utp23"/>
</dbReference>
<dbReference type="InterPro" id="IPR029060">
    <property type="entry name" value="PIN-like_dom_sf"/>
</dbReference>
<dbReference type="InterPro" id="IPR002716">
    <property type="entry name" value="PIN_dom"/>
</dbReference>
<dbReference type="PANTHER" id="PTHR12416">
    <property type="entry name" value="RRNA-PROCESSING PROTEIN UTP23 HOMOLOG"/>
    <property type="match status" value="1"/>
</dbReference>
<dbReference type="Pfam" id="PF04900">
    <property type="entry name" value="Fcf1"/>
    <property type="match status" value="1"/>
</dbReference>
<dbReference type="Pfam" id="PF24779">
    <property type="entry name" value="UTP23_sensor"/>
    <property type="match status" value="1"/>
</dbReference>
<dbReference type="SMART" id="SM00670">
    <property type="entry name" value="PINc"/>
    <property type="match status" value="1"/>
</dbReference>
<dbReference type="SUPFAM" id="SSF88723">
    <property type="entry name" value="PIN domain-like"/>
    <property type="match status" value="1"/>
</dbReference>
<feature type="chain" id="PRO_0000339874" description="rRNA-processing protein utp23">
    <location>
        <begin position="1"/>
        <end position="260"/>
    </location>
</feature>
<feature type="domain" description="PINc">
    <location>
        <begin position="26"/>
        <end position="129"/>
    </location>
</feature>
<feature type="region of interest" description="Disordered" evidence="2">
    <location>
        <begin position="188"/>
        <end position="260"/>
    </location>
</feature>
<proteinExistence type="inferred from homology"/>
<evidence type="ECO:0000250" key="1"/>
<evidence type="ECO:0000256" key="2">
    <source>
        <dbReference type="SAM" id="MobiDB-lite"/>
    </source>
</evidence>
<evidence type="ECO:0000269" key="3">
    <source>
    </source>
</evidence>
<evidence type="ECO:0000305" key="4"/>
<reference key="1">
    <citation type="journal article" date="2002" name="Nature">
        <title>The genome sequence of Schizosaccharomyces pombe.</title>
        <authorList>
            <person name="Wood V."/>
            <person name="Gwilliam R."/>
            <person name="Rajandream M.A."/>
            <person name="Lyne M.H."/>
            <person name="Lyne R."/>
            <person name="Stewart A."/>
            <person name="Sgouros J.G."/>
            <person name="Peat N."/>
            <person name="Hayles J."/>
            <person name="Baker S.G."/>
            <person name="Basham D."/>
            <person name="Bowman S."/>
            <person name="Brooks K."/>
            <person name="Brown D."/>
            <person name="Brown S."/>
            <person name="Chillingworth T."/>
            <person name="Churcher C.M."/>
            <person name="Collins M."/>
            <person name="Connor R."/>
            <person name="Cronin A."/>
            <person name="Davis P."/>
            <person name="Feltwell T."/>
            <person name="Fraser A."/>
            <person name="Gentles S."/>
            <person name="Goble A."/>
            <person name="Hamlin N."/>
            <person name="Harris D.E."/>
            <person name="Hidalgo J."/>
            <person name="Hodgson G."/>
            <person name="Holroyd S."/>
            <person name="Hornsby T."/>
            <person name="Howarth S."/>
            <person name="Huckle E.J."/>
            <person name="Hunt S."/>
            <person name="Jagels K."/>
            <person name="James K.D."/>
            <person name="Jones L."/>
            <person name="Jones M."/>
            <person name="Leather S."/>
            <person name="McDonald S."/>
            <person name="McLean J."/>
            <person name="Mooney P."/>
            <person name="Moule S."/>
            <person name="Mungall K.L."/>
            <person name="Murphy L.D."/>
            <person name="Niblett D."/>
            <person name="Odell C."/>
            <person name="Oliver K."/>
            <person name="O'Neil S."/>
            <person name="Pearson D."/>
            <person name="Quail M.A."/>
            <person name="Rabbinowitsch E."/>
            <person name="Rutherford K.M."/>
            <person name="Rutter S."/>
            <person name="Saunders D."/>
            <person name="Seeger K."/>
            <person name="Sharp S."/>
            <person name="Skelton J."/>
            <person name="Simmonds M.N."/>
            <person name="Squares R."/>
            <person name="Squares S."/>
            <person name="Stevens K."/>
            <person name="Taylor K."/>
            <person name="Taylor R.G."/>
            <person name="Tivey A."/>
            <person name="Walsh S.V."/>
            <person name="Warren T."/>
            <person name="Whitehead S."/>
            <person name="Woodward J.R."/>
            <person name="Volckaert G."/>
            <person name="Aert R."/>
            <person name="Robben J."/>
            <person name="Grymonprez B."/>
            <person name="Weltjens I."/>
            <person name="Vanstreels E."/>
            <person name="Rieger M."/>
            <person name="Schaefer M."/>
            <person name="Mueller-Auer S."/>
            <person name="Gabel C."/>
            <person name="Fuchs M."/>
            <person name="Duesterhoeft A."/>
            <person name="Fritzc C."/>
            <person name="Holzer E."/>
            <person name="Moestl D."/>
            <person name="Hilbert H."/>
            <person name="Borzym K."/>
            <person name="Langer I."/>
            <person name="Beck A."/>
            <person name="Lehrach H."/>
            <person name="Reinhardt R."/>
            <person name="Pohl T.M."/>
            <person name="Eger P."/>
            <person name="Zimmermann W."/>
            <person name="Wedler H."/>
            <person name="Wambutt R."/>
            <person name="Purnelle B."/>
            <person name="Goffeau A."/>
            <person name="Cadieu E."/>
            <person name="Dreano S."/>
            <person name="Gloux S."/>
            <person name="Lelaure V."/>
            <person name="Mottier S."/>
            <person name="Galibert F."/>
            <person name="Aves S.J."/>
            <person name="Xiang Z."/>
            <person name="Hunt C."/>
            <person name="Moore K."/>
            <person name="Hurst S.M."/>
            <person name="Lucas M."/>
            <person name="Rochet M."/>
            <person name="Gaillardin C."/>
            <person name="Tallada V.A."/>
            <person name="Garzon A."/>
            <person name="Thode G."/>
            <person name="Daga R.R."/>
            <person name="Cruzado L."/>
            <person name="Jimenez J."/>
            <person name="Sanchez M."/>
            <person name="del Rey F."/>
            <person name="Benito J."/>
            <person name="Dominguez A."/>
            <person name="Revuelta J.L."/>
            <person name="Moreno S."/>
            <person name="Armstrong J."/>
            <person name="Forsburg S.L."/>
            <person name="Cerutti L."/>
            <person name="Lowe T."/>
            <person name="McCombie W.R."/>
            <person name="Paulsen I."/>
            <person name="Potashkin J."/>
            <person name="Shpakovski G.V."/>
            <person name="Ussery D."/>
            <person name="Barrell B.G."/>
            <person name="Nurse P."/>
        </authorList>
    </citation>
    <scope>NUCLEOTIDE SEQUENCE [LARGE SCALE GENOMIC DNA]</scope>
    <source>
        <strain>972 / ATCC 24843</strain>
    </source>
</reference>
<reference key="2">
    <citation type="journal article" date="2006" name="Nat. Biotechnol.">
        <title>ORFeome cloning and global analysis of protein localization in the fission yeast Schizosaccharomyces pombe.</title>
        <authorList>
            <person name="Matsuyama A."/>
            <person name="Arai R."/>
            <person name="Yashiroda Y."/>
            <person name="Shirai A."/>
            <person name="Kamata A."/>
            <person name="Sekido S."/>
            <person name="Kobayashi Y."/>
            <person name="Hashimoto A."/>
            <person name="Hamamoto M."/>
            <person name="Hiraoka Y."/>
            <person name="Horinouchi S."/>
            <person name="Yoshida M."/>
        </authorList>
    </citation>
    <scope>SUBCELLULAR LOCATION [LARGE SCALE ANALYSIS]</scope>
</reference>
<comment type="function">
    <text evidence="1">Involved in rRNA-processing and ribosome biogenesis.</text>
</comment>
<comment type="subcellular location">
    <subcellularLocation>
        <location evidence="3">Nucleus</location>
        <location evidence="3">Nucleolus</location>
    </subcellularLocation>
</comment>
<comment type="similarity">
    <text evidence="4">Belongs to the UTP23/FCF1 family. UTP23 subfamily.</text>
</comment>
<name>UTP23_SCHPO</name>
<gene>
    <name type="primary">utp23</name>
    <name type="ORF">SPCC18.12c</name>
</gene>